<gene>
    <name evidence="1" type="primary">rpo10</name>
    <name evidence="1" type="synonym">rpoN</name>
    <name type="ordered locus">M1627_2132</name>
</gene>
<dbReference type="EC" id="2.7.7.6" evidence="1"/>
<dbReference type="EMBL" id="CP001401">
    <property type="protein sequence ID" value="ACP55998.1"/>
    <property type="molecule type" value="Genomic_DNA"/>
</dbReference>
<dbReference type="RefSeq" id="WP_012712019.1">
    <property type="nucleotide sequence ID" value="NC_012632.1"/>
</dbReference>
<dbReference type="SMR" id="C3N058"/>
<dbReference type="KEGG" id="sim:M1627_2132"/>
<dbReference type="HOGENOM" id="CLU_143122_1_1_2"/>
<dbReference type="Proteomes" id="UP000002307">
    <property type="component" value="Chromosome"/>
</dbReference>
<dbReference type="GO" id="GO:0005737">
    <property type="term" value="C:cytoplasm"/>
    <property type="evidence" value="ECO:0007669"/>
    <property type="project" value="UniProtKB-SubCell"/>
</dbReference>
<dbReference type="GO" id="GO:0000428">
    <property type="term" value="C:DNA-directed RNA polymerase complex"/>
    <property type="evidence" value="ECO:0007669"/>
    <property type="project" value="UniProtKB-KW"/>
</dbReference>
<dbReference type="GO" id="GO:0003677">
    <property type="term" value="F:DNA binding"/>
    <property type="evidence" value="ECO:0007669"/>
    <property type="project" value="InterPro"/>
</dbReference>
<dbReference type="GO" id="GO:0003899">
    <property type="term" value="F:DNA-directed RNA polymerase activity"/>
    <property type="evidence" value="ECO:0007669"/>
    <property type="project" value="UniProtKB-UniRule"/>
</dbReference>
<dbReference type="GO" id="GO:0008270">
    <property type="term" value="F:zinc ion binding"/>
    <property type="evidence" value="ECO:0007669"/>
    <property type="project" value="UniProtKB-UniRule"/>
</dbReference>
<dbReference type="GO" id="GO:0006351">
    <property type="term" value="P:DNA-templated transcription"/>
    <property type="evidence" value="ECO:0007669"/>
    <property type="project" value="UniProtKB-UniRule"/>
</dbReference>
<dbReference type="FunFam" id="1.10.10.60:FF:000335">
    <property type="entry name" value="DNA-directed RNA polymerase subunit N, putative"/>
    <property type="match status" value="1"/>
</dbReference>
<dbReference type="Gene3D" id="1.10.10.60">
    <property type="entry name" value="Homeodomain-like"/>
    <property type="match status" value="1"/>
</dbReference>
<dbReference type="HAMAP" id="MF_00250">
    <property type="entry name" value="RNApol_arch_Rpo10"/>
    <property type="match status" value="1"/>
</dbReference>
<dbReference type="InterPro" id="IPR023580">
    <property type="entry name" value="RNA_pol_su_RPB10"/>
</dbReference>
<dbReference type="InterPro" id="IPR020789">
    <property type="entry name" value="RNA_pol_suN_Zn-BS"/>
</dbReference>
<dbReference type="InterPro" id="IPR000268">
    <property type="entry name" value="RPABC5/Rpb10"/>
</dbReference>
<dbReference type="NCBIfam" id="NF003089">
    <property type="entry name" value="PRK04016.1"/>
    <property type="match status" value="1"/>
</dbReference>
<dbReference type="PANTHER" id="PTHR23431:SF3">
    <property type="entry name" value="DNA-DIRECTED RNA POLYMERASES I, II, AND III SUBUNIT RPABC5"/>
    <property type="match status" value="1"/>
</dbReference>
<dbReference type="PANTHER" id="PTHR23431">
    <property type="entry name" value="DNA-DIRECTED RNA POLYMERASES I, II, AND III SUBUNIT RPABC5 FAMILY MEMBER"/>
    <property type="match status" value="1"/>
</dbReference>
<dbReference type="Pfam" id="PF01194">
    <property type="entry name" value="RNA_pol_N"/>
    <property type="match status" value="1"/>
</dbReference>
<dbReference type="PIRSF" id="PIRSF005653">
    <property type="entry name" value="RNA_pol_N/8_sub"/>
    <property type="match status" value="1"/>
</dbReference>
<dbReference type="SUPFAM" id="SSF46924">
    <property type="entry name" value="RNA polymerase subunit RPB10"/>
    <property type="match status" value="1"/>
</dbReference>
<dbReference type="PROSITE" id="PS01112">
    <property type="entry name" value="RNA_POL_N_8KD"/>
    <property type="match status" value="1"/>
</dbReference>
<sequence>MMIPIRCFTCGSLIADKWQPFITRVNAGENPGKVLDDLGVKRYCCRRMLLSHIDIISEVIHYTRPI</sequence>
<feature type="chain" id="PRO_1000204534" description="DNA-directed RNA polymerase subunit Rpo10">
    <location>
        <begin position="1"/>
        <end position="66"/>
    </location>
</feature>
<feature type="binding site" evidence="1">
    <location>
        <position position="7"/>
    </location>
    <ligand>
        <name>Zn(2+)</name>
        <dbReference type="ChEBI" id="CHEBI:29105"/>
    </ligand>
</feature>
<feature type="binding site" evidence="1">
    <location>
        <position position="10"/>
    </location>
    <ligand>
        <name>Zn(2+)</name>
        <dbReference type="ChEBI" id="CHEBI:29105"/>
    </ligand>
</feature>
<feature type="binding site" evidence="1">
    <location>
        <position position="44"/>
    </location>
    <ligand>
        <name>Zn(2+)</name>
        <dbReference type="ChEBI" id="CHEBI:29105"/>
    </ligand>
</feature>
<feature type="binding site" evidence="1">
    <location>
        <position position="45"/>
    </location>
    <ligand>
        <name>Zn(2+)</name>
        <dbReference type="ChEBI" id="CHEBI:29105"/>
    </ligand>
</feature>
<keyword id="KW-0963">Cytoplasm</keyword>
<keyword id="KW-0240">DNA-directed RNA polymerase</keyword>
<keyword id="KW-0479">Metal-binding</keyword>
<keyword id="KW-0548">Nucleotidyltransferase</keyword>
<keyword id="KW-0804">Transcription</keyword>
<keyword id="KW-0808">Transferase</keyword>
<keyword id="KW-0862">Zinc</keyword>
<accession>C3N058</accession>
<proteinExistence type="inferred from homology"/>
<evidence type="ECO:0000255" key="1">
    <source>
        <dbReference type="HAMAP-Rule" id="MF_00250"/>
    </source>
</evidence>
<name>RPO10_SACI3</name>
<reference key="1">
    <citation type="journal article" date="2009" name="Proc. Natl. Acad. Sci. U.S.A.">
        <title>Biogeography of the Sulfolobus islandicus pan-genome.</title>
        <authorList>
            <person name="Reno M.L."/>
            <person name="Held N.L."/>
            <person name="Fields C.J."/>
            <person name="Burke P.V."/>
            <person name="Whitaker R.J."/>
        </authorList>
    </citation>
    <scope>NUCLEOTIDE SEQUENCE [LARGE SCALE GENOMIC DNA]</scope>
    <source>
        <strain>M.16.27</strain>
    </source>
</reference>
<comment type="function">
    <text evidence="1">DNA-dependent RNA polymerase (RNAP) catalyzes the transcription of DNA into RNA using the four ribonucleoside triphosphates as substrates.</text>
</comment>
<comment type="catalytic activity">
    <reaction evidence="1">
        <text>RNA(n) + a ribonucleoside 5'-triphosphate = RNA(n+1) + diphosphate</text>
        <dbReference type="Rhea" id="RHEA:21248"/>
        <dbReference type="Rhea" id="RHEA-COMP:14527"/>
        <dbReference type="Rhea" id="RHEA-COMP:17342"/>
        <dbReference type="ChEBI" id="CHEBI:33019"/>
        <dbReference type="ChEBI" id="CHEBI:61557"/>
        <dbReference type="ChEBI" id="CHEBI:140395"/>
        <dbReference type="EC" id="2.7.7.6"/>
    </reaction>
</comment>
<comment type="cofactor">
    <cofactor evidence="1">
        <name>Zn(2+)</name>
        <dbReference type="ChEBI" id="CHEBI:29105"/>
    </cofactor>
    <text evidence="1">Binds 1 zinc ion.</text>
</comment>
<comment type="subunit">
    <text evidence="1">Part of the RNA polymerase complex.</text>
</comment>
<comment type="subcellular location">
    <subcellularLocation>
        <location evidence="1">Cytoplasm</location>
    </subcellularLocation>
</comment>
<comment type="similarity">
    <text evidence="1">Belongs to the archaeal Rpo10/eukaryotic RPB10 RNA polymerase subunit family.</text>
</comment>
<protein>
    <recommendedName>
        <fullName evidence="1">DNA-directed RNA polymerase subunit Rpo10</fullName>
        <ecNumber evidence="1">2.7.7.6</ecNumber>
    </recommendedName>
    <alternativeName>
        <fullName evidence="1">DNA-directed RNA polymerase subunit N</fullName>
    </alternativeName>
</protein>
<organism>
    <name type="scientific">Saccharolobus islandicus (strain M.16.27)</name>
    <name type="common">Sulfolobus islandicus</name>
    <dbReference type="NCBI Taxonomy" id="427318"/>
    <lineage>
        <taxon>Archaea</taxon>
        <taxon>Thermoproteota</taxon>
        <taxon>Thermoprotei</taxon>
        <taxon>Sulfolobales</taxon>
        <taxon>Sulfolobaceae</taxon>
        <taxon>Saccharolobus</taxon>
    </lineage>
</organism>